<sequence>MASENMTPQEYIGHHLNNLQLDLRTFSLVDPQNPPATFWTLNIDSMFFSVVLGLLFLVMFRSVAKKATSGVPGKFQTAIELIVGFVHGSVKDMYHGKSKLIAPLALTIFVWVFLMNLMDLLPIDLLPYIAEHWLGLPATRVVPSADVNITLSMALGVFILILFYSIKMKGIGGFAKELTLQPFNHWAFIPVNLILEGVSLLSKPVSLGLRLFGNMYAGELIFILIAGLLPWWSQWILNVPWAIFHILIITLQAFIFMVLTIVYLSMASEEH</sequence>
<keyword id="KW-0066">ATP synthesis</keyword>
<keyword id="KW-0997">Cell inner membrane</keyword>
<keyword id="KW-1003">Cell membrane</keyword>
<keyword id="KW-0138">CF(0)</keyword>
<keyword id="KW-0375">Hydrogen ion transport</keyword>
<keyword id="KW-0406">Ion transport</keyword>
<keyword id="KW-0472">Membrane</keyword>
<keyword id="KW-0812">Transmembrane</keyword>
<keyword id="KW-1133">Transmembrane helix</keyword>
<keyword id="KW-0813">Transport</keyword>
<evidence type="ECO:0000255" key="1">
    <source>
        <dbReference type="HAMAP-Rule" id="MF_01393"/>
    </source>
</evidence>
<organism>
    <name type="scientific">Salmonella dublin (strain CT_02021853)</name>
    <dbReference type="NCBI Taxonomy" id="439851"/>
    <lineage>
        <taxon>Bacteria</taxon>
        <taxon>Pseudomonadati</taxon>
        <taxon>Pseudomonadota</taxon>
        <taxon>Gammaproteobacteria</taxon>
        <taxon>Enterobacterales</taxon>
        <taxon>Enterobacteriaceae</taxon>
        <taxon>Salmonella</taxon>
    </lineage>
</organism>
<name>ATP6_SALDC</name>
<proteinExistence type="inferred from homology"/>
<feature type="chain" id="PRO_0000362435" description="ATP synthase subunit a">
    <location>
        <begin position="1"/>
        <end position="271"/>
    </location>
</feature>
<feature type="transmembrane region" description="Helical" evidence="1">
    <location>
        <begin position="38"/>
        <end position="58"/>
    </location>
</feature>
<feature type="transmembrane region" description="Helical" evidence="1">
    <location>
        <begin position="100"/>
        <end position="120"/>
    </location>
</feature>
<feature type="transmembrane region" description="Helical" evidence="1">
    <location>
        <begin position="146"/>
        <end position="166"/>
    </location>
</feature>
<feature type="transmembrane region" description="Helical" evidence="1">
    <location>
        <begin position="220"/>
        <end position="240"/>
    </location>
</feature>
<feature type="transmembrane region" description="Helical" evidence="1">
    <location>
        <begin position="242"/>
        <end position="262"/>
    </location>
</feature>
<reference key="1">
    <citation type="journal article" date="2011" name="J. Bacteriol.">
        <title>Comparative genomics of 28 Salmonella enterica isolates: evidence for CRISPR-mediated adaptive sublineage evolution.</title>
        <authorList>
            <person name="Fricke W.F."/>
            <person name="Mammel M.K."/>
            <person name="McDermott P.F."/>
            <person name="Tartera C."/>
            <person name="White D.G."/>
            <person name="Leclerc J.E."/>
            <person name="Ravel J."/>
            <person name="Cebula T.A."/>
        </authorList>
    </citation>
    <scope>NUCLEOTIDE SEQUENCE [LARGE SCALE GENOMIC DNA]</scope>
    <source>
        <strain>CT_02021853</strain>
    </source>
</reference>
<protein>
    <recommendedName>
        <fullName evidence="1">ATP synthase subunit a</fullName>
    </recommendedName>
    <alternativeName>
        <fullName evidence="1">ATP synthase F0 sector subunit a</fullName>
    </alternativeName>
    <alternativeName>
        <fullName evidence="1">F-ATPase subunit 6</fullName>
    </alternativeName>
</protein>
<gene>
    <name evidence="1" type="primary">atpB</name>
    <name type="ordered locus">SeD_A4261</name>
</gene>
<comment type="function">
    <text evidence="1">Key component of the proton channel; it plays a direct role in the translocation of protons across the membrane.</text>
</comment>
<comment type="subunit">
    <text evidence="1">F-type ATPases have 2 components, CF(1) - the catalytic core - and CF(0) - the membrane proton channel. CF(1) has five subunits: alpha(3), beta(3), gamma(1), delta(1), epsilon(1). CF(0) has three main subunits: a(1), b(2) and c(9-12). The alpha and beta chains form an alternating ring which encloses part of the gamma chain. CF(1) is attached to CF(0) by a central stalk formed by the gamma and epsilon chains, while a peripheral stalk is formed by the delta and b chains.</text>
</comment>
<comment type="subcellular location">
    <subcellularLocation>
        <location evidence="1">Cell inner membrane</location>
        <topology evidence="1">Multi-pass membrane protein</topology>
    </subcellularLocation>
</comment>
<comment type="similarity">
    <text evidence="1">Belongs to the ATPase A chain family.</text>
</comment>
<dbReference type="EMBL" id="CP001144">
    <property type="protein sequence ID" value="ACH77649.1"/>
    <property type="molecule type" value="Genomic_DNA"/>
</dbReference>
<dbReference type="RefSeq" id="WP_000135632.1">
    <property type="nucleotide sequence ID" value="NC_011205.1"/>
</dbReference>
<dbReference type="SMR" id="B5FN39"/>
<dbReference type="KEGG" id="sed:SeD_A4261"/>
<dbReference type="HOGENOM" id="CLU_041018_1_0_6"/>
<dbReference type="Proteomes" id="UP000008322">
    <property type="component" value="Chromosome"/>
</dbReference>
<dbReference type="GO" id="GO:0005886">
    <property type="term" value="C:plasma membrane"/>
    <property type="evidence" value="ECO:0007669"/>
    <property type="project" value="UniProtKB-SubCell"/>
</dbReference>
<dbReference type="GO" id="GO:0045259">
    <property type="term" value="C:proton-transporting ATP synthase complex"/>
    <property type="evidence" value="ECO:0007669"/>
    <property type="project" value="UniProtKB-KW"/>
</dbReference>
<dbReference type="GO" id="GO:0046933">
    <property type="term" value="F:proton-transporting ATP synthase activity, rotational mechanism"/>
    <property type="evidence" value="ECO:0007669"/>
    <property type="project" value="UniProtKB-UniRule"/>
</dbReference>
<dbReference type="GO" id="GO:0042777">
    <property type="term" value="P:proton motive force-driven plasma membrane ATP synthesis"/>
    <property type="evidence" value="ECO:0007669"/>
    <property type="project" value="TreeGrafter"/>
</dbReference>
<dbReference type="CDD" id="cd00310">
    <property type="entry name" value="ATP-synt_Fo_a_6"/>
    <property type="match status" value="1"/>
</dbReference>
<dbReference type="FunFam" id="1.20.120.220:FF:000002">
    <property type="entry name" value="ATP synthase subunit a"/>
    <property type="match status" value="1"/>
</dbReference>
<dbReference type="Gene3D" id="1.20.120.220">
    <property type="entry name" value="ATP synthase, F0 complex, subunit A"/>
    <property type="match status" value="1"/>
</dbReference>
<dbReference type="HAMAP" id="MF_01393">
    <property type="entry name" value="ATP_synth_a_bact"/>
    <property type="match status" value="1"/>
</dbReference>
<dbReference type="InterPro" id="IPR045082">
    <property type="entry name" value="ATP_syn_F0_a_bact/chloroplast"/>
</dbReference>
<dbReference type="InterPro" id="IPR000568">
    <property type="entry name" value="ATP_synth_F0_asu"/>
</dbReference>
<dbReference type="InterPro" id="IPR023011">
    <property type="entry name" value="ATP_synth_F0_asu_AS"/>
</dbReference>
<dbReference type="InterPro" id="IPR035908">
    <property type="entry name" value="F0_ATP_A_sf"/>
</dbReference>
<dbReference type="NCBIfam" id="TIGR01131">
    <property type="entry name" value="ATP_synt_6_or_A"/>
    <property type="match status" value="1"/>
</dbReference>
<dbReference type="NCBIfam" id="NF004477">
    <property type="entry name" value="PRK05815.1-1"/>
    <property type="match status" value="1"/>
</dbReference>
<dbReference type="PANTHER" id="PTHR42823">
    <property type="entry name" value="ATP SYNTHASE SUBUNIT A, CHLOROPLASTIC"/>
    <property type="match status" value="1"/>
</dbReference>
<dbReference type="PANTHER" id="PTHR42823:SF3">
    <property type="entry name" value="ATP SYNTHASE SUBUNIT A, CHLOROPLASTIC"/>
    <property type="match status" value="1"/>
</dbReference>
<dbReference type="Pfam" id="PF00119">
    <property type="entry name" value="ATP-synt_A"/>
    <property type="match status" value="1"/>
</dbReference>
<dbReference type="PRINTS" id="PR00123">
    <property type="entry name" value="ATPASEA"/>
</dbReference>
<dbReference type="SUPFAM" id="SSF81336">
    <property type="entry name" value="F1F0 ATP synthase subunit A"/>
    <property type="match status" value="1"/>
</dbReference>
<dbReference type="PROSITE" id="PS00449">
    <property type="entry name" value="ATPASE_A"/>
    <property type="match status" value="1"/>
</dbReference>
<accession>B5FN39</accession>